<comment type="function">
    <text evidence="3 5">E3 ubiquitin-protein ligase required for accumulation of repair proteins to sites of DNA damage. Acts with UBE2N/UBC13 to amplify the RNF8-dependent histone ubiquitination. Recruited to sites of DNA damage at double-strand breaks (DSBs) by binding to ubiquitinated histone H2A and H2AX and amplifies the RNF8-dependent H2A ubiquitination, promoting the formation of 'Lys-63'-linked ubiquitin conjugates. This leads to concentrate ubiquitinated histones H2A and H2AX at DNA lesions to the threshold required for recruitment of TP53BP1 and BRCA1. Also recruited at DNA interstrand cross-links (ICLs) sites and promotes accumulation of 'Lys-63'-linked ubiquitination of histones H2A and H2AX, leading to recruitment of FAAP20 and Fanconi anemia (FA) complex, followed by interstrand cross-link repair. H2A ubiquitination also mediates the ATM-dependent transcriptional silencing at regions flanking DSBs in cis, a mechanism to avoid collision between transcription and repair intermediates. Also involved in class switch recombination in immune system, via its role in regulation of DSBs repair. Following DNA damage, promotes the ubiquitination and degradation of JMJD2A/KDM4A in collaboration with RNF8, leading to unmask H4K20me2 mark and promote the recruitment of TP53BP1 at DNA damage sites. Not able to initiate 'Lys-63'-linked ubiquitination in vitro; possibly due to partial occlusion of the UBE2N/UBC13-binding region. Catalyzes monoubiquitination of 'Lys-13' and 'Lys-15' of nucleosomal histone H2A (H2AK13Ub and H2AK15Ub, respectively).</text>
</comment>
<comment type="catalytic activity">
    <reaction evidence="3">
        <text>S-ubiquitinyl-[E2 ubiquitin-conjugating enzyme]-L-cysteine + [acceptor protein]-L-lysine = [E2 ubiquitin-conjugating enzyme]-L-cysteine + N(6)-ubiquitinyl-[acceptor protein]-L-lysine.</text>
        <dbReference type="EC" id="2.3.2.27"/>
    </reaction>
</comment>
<comment type="pathway">
    <text evidence="3">Protein modification; protein ubiquitination.</text>
</comment>
<comment type="subunit">
    <text evidence="3">Monomer. Interacts with UBE2N/UBC13.</text>
</comment>
<comment type="subcellular location">
    <subcellularLocation>
        <location evidence="3">Nucleus</location>
    </subcellularLocation>
    <text evidence="3">Localizes to double-strand breaks (DSBs) sites of DNA damage.</text>
</comment>
<comment type="domain">
    <text evidence="3">The MIU motif (motif interacting with ubiquitin) mediates the interaction with both 'Lys-48'- and 'Lys-63'-linked ubiquitin chains. The UMI motif mediates interaction with ubiquitin with a preference for 'Lys-63'-linked ubiquitin. The specificity for different types of ubiquitin is mediated by juxtaposition of ubiquitin-binding motifs (MIU and UMI motifs) with LR motifs (LRMs).</text>
</comment>
<comment type="PTM">
    <text evidence="3">Sumoylated with SUMO1 by PIAS4 in response to double-strand breaks (DSBs).</text>
</comment>
<comment type="PTM">
    <text evidence="3">Ubiquitinated.</text>
</comment>
<comment type="similarity">
    <text evidence="3">Belongs to the RNF168 family.</text>
</comment>
<comment type="caution">
    <text evidence="3">According to a well-established model, RNF168 cannot initiate H2A 'Lys-63'-linked ubiquitination and is recruited following RNF8-dependent histone ubiquitination to amplify H2A 'Lys-63'-linked ubiquitination. However, other data suggest that RNF168 is the priming ubiquitin ligase by mediating monoubiquitination of 'Lys-13' and 'Lys-15' of nucleosomal histone H2A (H2AK13Ub and H2AK15Ub respectively). These data suggest that RNF168 might be recruited to DSBs sites in a RNF8-dependent manner by binding to non-histone proteins ubiquitinated via 'Lys-63'-linked and initiates monoubiquitination of H2A, which is then amplified by RNF8. Additional evidence is however required to confirm these data.</text>
</comment>
<comment type="sequence caution" evidence="6">
    <conflict type="erroneous initiation">
        <sequence resource="EMBL-CDS" id="AAH46815"/>
    </conflict>
    <text>Truncated N-terminus.</text>
</comment>
<comment type="sequence caution" evidence="6">
    <conflict type="erroneous termination">
        <sequence resource="EMBL-CDS" id="AAH46815"/>
    </conflict>
    <text>Truncated C-terminus.</text>
</comment>
<accession>Q80XJ2</accession>
<protein>
    <recommendedName>
        <fullName evidence="3">E3 ubiquitin-protein ligase RNF168</fullName>
        <ecNumber evidence="3">2.3.2.27</ecNumber>
    </recommendedName>
    <alternativeName>
        <fullName evidence="3">RING finger protein 168</fullName>
    </alternativeName>
    <alternativeName>
        <fullName>RING-type E3 ubiquitin transferase RNF168</fullName>
    </alternativeName>
</protein>
<reference key="1">
    <citation type="journal article" date="2009" name="PLoS Biol.">
        <title>Lineage-specific biology revealed by a finished genome assembly of the mouse.</title>
        <authorList>
            <person name="Church D.M."/>
            <person name="Goodstadt L."/>
            <person name="Hillier L.W."/>
            <person name="Zody M.C."/>
            <person name="Goldstein S."/>
            <person name="She X."/>
            <person name="Bult C.J."/>
            <person name="Agarwala R."/>
            <person name="Cherry J.L."/>
            <person name="DiCuccio M."/>
            <person name="Hlavina W."/>
            <person name="Kapustin Y."/>
            <person name="Meric P."/>
            <person name="Maglott D."/>
            <person name="Birtle Z."/>
            <person name="Marques A.C."/>
            <person name="Graves T."/>
            <person name="Zhou S."/>
            <person name="Teague B."/>
            <person name="Potamousis K."/>
            <person name="Churas C."/>
            <person name="Place M."/>
            <person name="Herschleb J."/>
            <person name="Runnheim R."/>
            <person name="Forrest D."/>
            <person name="Amos-Landgraf J."/>
            <person name="Schwartz D.C."/>
            <person name="Cheng Z."/>
            <person name="Lindblad-Toh K."/>
            <person name="Eichler E.E."/>
            <person name="Ponting C.P."/>
        </authorList>
    </citation>
    <scope>NUCLEOTIDE SEQUENCE [LARGE SCALE GENOMIC DNA]</scope>
    <source>
        <strain>C57BL/6J</strain>
    </source>
</reference>
<reference key="2">
    <citation type="journal article" date="2004" name="Genome Res.">
        <title>The status, quality, and expansion of the NIH full-length cDNA project: the Mammalian Gene Collection (MGC).</title>
        <authorList>
            <consortium name="The MGC Project Team"/>
        </authorList>
    </citation>
    <scope>NUCLEOTIDE SEQUENCE [LARGE SCALE MRNA]</scope>
    <source>
        <strain>C57BL/6J</strain>
        <tissue>Brain</tissue>
    </source>
</reference>
<reference key="3">
    <citation type="journal article" date="2010" name="Cell">
        <title>A tissue-specific atlas of mouse protein phosphorylation and expression.</title>
        <authorList>
            <person name="Huttlin E.L."/>
            <person name="Jedrychowski M.P."/>
            <person name="Elias J.E."/>
            <person name="Goswami T."/>
            <person name="Rad R."/>
            <person name="Beausoleil S.A."/>
            <person name="Villen J."/>
            <person name="Haas W."/>
            <person name="Sowa M.E."/>
            <person name="Gygi S.P."/>
        </authorList>
    </citation>
    <scope>PHOSPHORYLATION [LARGE SCALE ANALYSIS] AT SER-70</scope>
    <scope>IDENTIFICATION BY MASS SPECTROMETRY [LARGE SCALE ANALYSIS]</scope>
    <source>
        <tissue>Brain</tissue>
        <tissue>Spleen</tissue>
    </source>
</reference>
<reference key="4">
    <citation type="journal article" date="2010" name="Proc. Natl. Acad. Sci. U.S.A.">
        <title>The RNF8/RNF168 ubiquitin ligase cascade facilitates class switch recombination.</title>
        <authorList>
            <person name="Ramachandran S."/>
            <person name="Chahwan R."/>
            <person name="Nepal R.M."/>
            <person name="Frieder D."/>
            <person name="Panier S."/>
            <person name="Roa S."/>
            <person name="Zaheen A."/>
            <person name="Durocher D."/>
            <person name="Scharff M.D."/>
            <person name="Martin A."/>
        </authorList>
    </citation>
    <scope>FUNCTION</scope>
</reference>
<name>RN168_MOUSE</name>
<sequence length="565" mass="64779">MAAPKTSIPSLAECQCGICMEILLEPVTLPCNHTLCNPCFQSTVEKANLCCPFCRRRVSSWTRYHTRRNSLVNTDLWEIIQKHYAKECKLRISGQESKEIIDECQPVRRLSEPGELRREYEEEISRVEAERQASKEEENKASEEYIQRLLAEEEEEEKRQREKRRSEMEEQLRGDEELARSLSTSINSNYERNTLASPLSSRKSDPVTNKSQKKNTSKQKTFGDIQKYLSPKLKPGTALACKAELEEDICKSKETDRSDTKSPVLQDTEIEKNIPTLSPQTCLETQEQGSESSAGIPGPQLCVGDTKESLEGKVETVSTSPDDLCIVNDDGPRATVFYSNEAAVNSSSKIENEEYSVTGVPQLTGGNRVPTESRVYHLLVEEEISDRENQESVFEEVMDPCFSAKRRKIFIESSSDQEETEVNFTQKLIDLEHMLFERHKQEEQDRLLALQLQKEVDKEQMVPNRQKGSPDQYQLRTPSPPDRLLNRQRKNSKDRNSLQQTNADHSKSPRNTKGDYWEPFKNTWKDSVNGTKMPTSTQDNCNVSKSAYTVQHRKSQRSIVQMFQR</sequence>
<feature type="chain" id="PRO_0000245597" description="E3 ubiquitin-protein ligase RNF168">
    <location>
        <begin position="1"/>
        <end position="565"/>
    </location>
</feature>
<feature type="zinc finger region" description="RING-type" evidence="3">
    <location>
        <begin position="16"/>
        <end position="55"/>
    </location>
</feature>
<feature type="region of interest" description="Disordered" evidence="4">
    <location>
        <begin position="150"/>
        <end position="223"/>
    </location>
</feature>
<feature type="region of interest" description="Disordered" evidence="4">
    <location>
        <begin position="252"/>
        <end position="302"/>
    </location>
</feature>
<feature type="region of interest" description="Disordered" evidence="4">
    <location>
        <begin position="458"/>
        <end position="521"/>
    </location>
</feature>
<feature type="short sequence motif" description="LR motif 1" evidence="3">
    <location>
        <begin position="110"/>
        <end position="128"/>
    </location>
</feature>
<feature type="short sequence motif" description="UMI motif" evidence="3">
    <location>
        <begin position="143"/>
        <end position="151"/>
    </location>
</feature>
<feature type="short sequence motif" description="MIU motif 1" evidence="3">
    <location>
        <begin position="168"/>
        <end position="191"/>
    </location>
</feature>
<feature type="short sequence motif" description="MIU motif 2" evidence="3">
    <location>
        <begin position="438"/>
        <end position="461"/>
    </location>
</feature>
<feature type="short sequence motif" description="LR motif 2" evidence="3">
    <location>
        <begin position="465"/>
        <end position="476"/>
    </location>
</feature>
<feature type="compositionally biased region" description="Basic and acidic residues" evidence="4">
    <location>
        <begin position="157"/>
        <end position="179"/>
    </location>
</feature>
<feature type="compositionally biased region" description="Polar residues" evidence="4">
    <location>
        <begin position="181"/>
        <end position="201"/>
    </location>
</feature>
<feature type="compositionally biased region" description="Polar residues" evidence="4">
    <location>
        <begin position="275"/>
        <end position="293"/>
    </location>
</feature>
<feature type="compositionally biased region" description="Polar residues" evidence="4">
    <location>
        <begin position="466"/>
        <end position="477"/>
    </location>
</feature>
<feature type="compositionally biased region" description="Basic and acidic residues" evidence="4">
    <location>
        <begin position="504"/>
        <end position="518"/>
    </location>
</feature>
<feature type="modified residue" description="Phosphoserine" evidence="7">
    <location>
        <position position="70"/>
    </location>
</feature>
<feature type="modified residue" description="Phosphoserine" evidence="2">
    <location>
        <position position="134"/>
    </location>
</feature>
<feature type="modified residue" description="Phosphoserine" evidence="1">
    <location>
        <position position="197"/>
    </location>
</feature>
<feature type="modified residue" description="Phosphoserine" evidence="2">
    <location>
        <position position="413"/>
    </location>
</feature>
<feature type="modified residue" description="Phosphoserine" evidence="2">
    <location>
        <position position="414"/>
    </location>
</feature>
<feature type="modified residue" description="Phosphoserine" evidence="2">
    <location>
        <position position="469"/>
    </location>
</feature>
<feature type="cross-link" description="Glycyl lysine isopeptide (Lys-Gly) (interchain with G-Cter in SUMO2)" evidence="2">
    <location>
        <position position="210"/>
    </location>
</feature>
<feature type="cross-link" description="Glycyl lysine isopeptide (Lys-Gly) (interchain with G-Cter in SUMO2)" evidence="2">
    <location>
        <position position="525"/>
    </location>
</feature>
<organism>
    <name type="scientific">Mus musculus</name>
    <name type="common">Mouse</name>
    <dbReference type="NCBI Taxonomy" id="10090"/>
    <lineage>
        <taxon>Eukaryota</taxon>
        <taxon>Metazoa</taxon>
        <taxon>Chordata</taxon>
        <taxon>Craniata</taxon>
        <taxon>Vertebrata</taxon>
        <taxon>Euteleostomi</taxon>
        <taxon>Mammalia</taxon>
        <taxon>Eutheria</taxon>
        <taxon>Euarchontoglires</taxon>
        <taxon>Glires</taxon>
        <taxon>Rodentia</taxon>
        <taxon>Myomorpha</taxon>
        <taxon>Muroidea</taxon>
        <taxon>Muridae</taxon>
        <taxon>Murinae</taxon>
        <taxon>Mus</taxon>
        <taxon>Mus</taxon>
    </lineage>
</organism>
<proteinExistence type="evidence at protein level"/>
<dbReference type="EC" id="2.3.2.27" evidence="3"/>
<dbReference type="EMBL" id="AC126265">
    <property type="status" value="NOT_ANNOTATED_CDS"/>
    <property type="molecule type" value="Genomic_DNA"/>
</dbReference>
<dbReference type="EMBL" id="BC046815">
    <property type="protein sequence ID" value="AAH46815.1"/>
    <property type="status" value="ALT_SEQ"/>
    <property type="molecule type" value="mRNA"/>
</dbReference>
<dbReference type="RefSeq" id="NP_081631.2">
    <property type="nucleotide sequence ID" value="NM_027355.2"/>
</dbReference>
<dbReference type="SMR" id="Q80XJ2"/>
<dbReference type="BioGRID" id="213933">
    <property type="interactions" value="3"/>
</dbReference>
<dbReference type="FunCoup" id="Q80XJ2">
    <property type="interactions" value="2332"/>
</dbReference>
<dbReference type="STRING" id="10090.ENSMUSP00000126484"/>
<dbReference type="iPTMnet" id="Q80XJ2"/>
<dbReference type="PhosphoSitePlus" id="Q80XJ2"/>
<dbReference type="jPOST" id="Q80XJ2"/>
<dbReference type="PaxDb" id="10090-ENSMUSP00000126484"/>
<dbReference type="ProteomicsDB" id="299840"/>
<dbReference type="Antibodypedia" id="33941">
    <property type="antibodies" value="231 antibodies from 30 providers"/>
</dbReference>
<dbReference type="DNASU" id="70238"/>
<dbReference type="Ensembl" id="ENSMUST00000014218.15">
    <property type="protein sequence ID" value="ENSMUSP00000014218.9"/>
    <property type="gene ID" value="ENSMUSG00000014074.18"/>
</dbReference>
<dbReference type="GeneID" id="70238"/>
<dbReference type="KEGG" id="mmu:70238"/>
<dbReference type="AGR" id="MGI:1917488"/>
<dbReference type="CTD" id="165918"/>
<dbReference type="MGI" id="MGI:1917488">
    <property type="gene designation" value="Rnf168"/>
</dbReference>
<dbReference type="VEuPathDB" id="HostDB:ENSMUSG00000014074"/>
<dbReference type="eggNOG" id="KOG4159">
    <property type="taxonomic scope" value="Eukaryota"/>
</dbReference>
<dbReference type="GeneTree" id="ENSGT00940000153680"/>
<dbReference type="InParanoid" id="Q80XJ2"/>
<dbReference type="OrthoDB" id="426657at2759"/>
<dbReference type="Reactome" id="R-MMU-3108214">
    <property type="pathway name" value="SUMOylation of DNA damage response and repair proteins"/>
</dbReference>
<dbReference type="Reactome" id="R-MMU-5693565">
    <property type="pathway name" value="Recruitment and ATM-mediated phosphorylation of repair and signaling proteins at DNA double strand breaks"/>
</dbReference>
<dbReference type="Reactome" id="R-MMU-5693571">
    <property type="pathway name" value="Nonhomologous End-Joining (NHEJ)"/>
</dbReference>
<dbReference type="Reactome" id="R-MMU-5693607">
    <property type="pathway name" value="Processing of DNA double-strand break ends"/>
</dbReference>
<dbReference type="Reactome" id="R-MMU-69473">
    <property type="pathway name" value="G2/M DNA damage checkpoint"/>
</dbReference>
<dbReference type="UniPathway" id="UPA00143"/>
<dbReference type="BioGRID-ORCS" id="70238">
    <property type="hits" value="20 hits in 114 CRISPR screens"/>
</dbReference>
<dbReference type="ChiTaRS" id="Rnf168">
    <property type="organism name" value="mouse"/>
</dbReference>
<dbReference type="PRO" id="PR:Q80XJ2"/>
<dbReference type="Proteomes" id="UP000000589">
    <property type="component" value="Chromosome 16"/>
</dbReference>
<dbReference type="RNAct" id="Q80XJ2">
    <property type="molecule type" value="protein"/>
</dbReference>
<dbReference type="Bgee" id="ENSMUSG00000014074">
    <property type="expression patterns" value="Expressed in animal zygote and 230 other cell types or tissues"/>
</dbReference>
<dbReference type="ExpressionAtlas" id="Q80XJ2">
    <property type="expression patterns" value="baseline and differential"/>
</dbReference>
<dbReference type="GO" id="GO:1990391">
    <property type="term" value="C:DNA repair complex"/>
    <property type="evidence" value="ECO:0000314"/>
    <property type="project" value="MGI"/>
</dbReference>
<dbReference type="GO" id="GO:0005634">
    <property type="term" value="C:nucleus"/>
    <property type="evidence" value="ECO:0000250"/>
    <property type="project" value="UniProtKB"/>
</dbReference>
<dbReference type="GO" id="GO:0032991">
    <property type="term" value="C:protein-containing complex"/>
    <property type="evidence" value="ECO:0000266"/>
    <property type="project" value="MGI"/>
</dbReference>
<dbReference type="GO" id="GO:0035861">
    <property type="term" value="C:site of double-strand break"/>
    <property type="evidence" value="ECO:0000250"/>
    <property type="project" value="UniProtKB"/>
</dbReference>
<dbReference type="GO" id="GO:0000151">
    <property type="term" value="C:ubiquitin ligase complex"/>
    <property type="evidence" value="ECO:0000250"/>
    <property type="project" value="UniProtKB"/>
</dbReference>
<dbReference type="GO" id="GO:0003682">
    <property type="term" value="F:chromatin binding"/>
    <property type="evidence" value="ECO:0000250"/>
    <property type="project" value="UniProtKB"/>
</dbReference>
<dbReference type="GO" id="GO:0042393">
    <property type="term" value="F:histone binding"/>
    <property type="evidence" value="ECO:0000250"/>
    <property type="project" value="UniProtKB"/>
</dbReference>
<dbReference type="GO" id="GO:0070530">
    <property type="term" value="F:K63-linked polyubiquitin modification-dependent protein binding"/>
    <property type="evidence" value="ECO:0000250"/>
    <property type="project" value="UniProtKB"/>
</dbReference>
<dbReference type="GO" id="GO:0043130">
    <property type="term" value="F:ubiquitin binding"/>
    <property type="evidence" value="ECO:0000250"/>
    <property type="project" value="UniProtKB"/>
</dbReference>
<dbReference type="GO" id="GO:0004842">
    <property type="term" value="F:ubiquitin-protein transferase activity"/>
    <property type="evidence" value="ECO:0000250"/>
    <property type="project" value="UniProtKB"/>
</dbReference>
<dbReference type="GO" id="GO:0008270">
    <property type="term" value="F:zinc ion binding"/>
    <property type="evidence" value="ECO:0007669"/>
    <property type="project" value="UniProtKB-KW"/>
</dbReference>
<dbReference type="GO" id="GO:0034644">
    <property type="term" value="P:cellular response to UV"/>
    <property type="evidence" value="ECO:0000314"/>
    <property type="project" value="MGI"/>
</dbReference>
<dbReference type="GO" id="GO:0006974">
    <property type="term" value="P:DNA damage response"/>
    <property type="evidence" value="ECO:0000250"/>
    <property type="project" value="UniProtKB"/>
</dbReference>
<dbReference type="GO" id="GO:0140861">
    <property type="term" value="P:DNA repair-dependent chromatin remodeling"/>
    <property type="evidence" value="ECO:0000250"/>
    <property type="project" value="UniProtKB"/>
</dbReference>
<dbReference type="GO" id="GO:0006302">
    <property type="term" value="P:double-strand break repair"/>
    <property type="evidence" value="ECO:0000250"/>
    <property type="project" value="UniProtKB"/>
</dbReference>
<dbReference type="GO" id="GO:0045190">
    <property type="term" value="P:isotype switching"/>
    <property type="evidence" value="ECO:0000315"/>
    <property type="project" value="UniProtKB"/>
</dbReference>
<dbReference type="GO" id="GO:0034244">
    <property type="term" value="P:negative regulation of transcription elongation by RNA polymerase II"/>
    <property type="evidence" value="ECO:0000250"/>
    <property type="project" value="UniProtKB"/>
</dbReference>
<dbReference type="GO" id="GO:0045739">
    <property type="term" value="P:positive regulation of DNA repair"/>
    <property type="evidence" value="ECO:0000250"/>
    <property type="project" value="UniProtKB"/>
</dbReference>
<dbReference type="GO" id="GO:0070534">
    <property type="term" value="P:protein K63-linked ubiquitination"/>
    <property type="evidence" value="ECO:0000250"/>
    <property type="project" value="UniProtKB"/>
</dbReference>
<dbReference type="GO" id="GO:0016567">
    <property type="term" value="P:protein ubiquitination"/>
    <property type="evidence" value="ECO:0000250"/>
    <property type="project" value="UniProtKB"/>
</dbReference>
<dbReference type="GO" id="GO:0032880">
    <property type="term" value="P:regulation of protein localization"/>
    <property type="evidence" value="ECO:0000315"/>
    <property type="project" value="MGI"/>
</dbReference>
<dbReference type="GO" id="GO:0010212">
    <property type="term" value="P:response to ionizing radiation"/>
    <property type="evidence" value="ECO:0000250"/>
    <property type="project" value="UniProtKB"/>
</dbReference>
<dbReference type="GO" id="GO:0006511">
    <property type="term" value="P:ubiquitin-dependent protein catabolic process"/>
    <property type="evidence" value="ECO:0000250"/>
    <property type="project" value="UniProtKB"/>
</dbReference>
<dbReference type="CDD" id="cd21952">
    <property type="entry name" value="MIU2_RNF168"/>
    <property type="match status" value="1"/>
</dbReference>
<dbReference type="CDD" id="cd16550">
    <property type="entry name" value="RING-HC_RNF168"/>
    <property type="match status" value="1"/>
</dbReference>
<dbReference type="CDD" id="cd22265">
    <property type="entry name" value="UDM1_RNF168"/>
    <property type="match status" value="1"/>
</dbReference>
<dbReference type="FunFam" id="3.30.40.10:FF:000466">
    <property type="entry name" value="E3 ubiquitin-protein ligase RNF168"/>
    <property type="match status" value="1"/>
</dbReference>
<dbReference type="Gene3D" id="3.30.40.10">
    <property type="entry name" value="Zinc/RING finger domain, C3HC4 (zinc finger)"/>
    <property type="match status" value="1"/>
</dbReference>
<dbReference type="HAMAP" id="MF_03066">
    <property type="entry name" value="RNF168"/>
    <property type="match status" value="1"/>
</dbReference>
<dbReference type="InterPro" id="IPR034725">
    <property type="entry name" value="RNF168"/>
</dbReference>
<dbReference type="InterPro" id="IPR051657">
    <property type="entry name" value="RNF168/RNF169_E3_ubiq-ligase"/>
</dbReference>
<dbReference type="InterPro" id="IPR001841">
    <property type="entry name" value="Znf_RING"/>
</dbReference>
<dbReference type="InterPro" id="IPR013083">
    <property type="entry name" value="Znf_RING/FYVE/PHD"/>
</dbReference>
<dbReference type="PANTHER" id="PTHR23328:SF1">
    <property type="entry name" value="E3 UBIQUITIN-PROTEIN LIGASE RNF168"/>
    <property type="match status" value="1"/>
</dbReference>
<dbReference type="PANTHER" id="PTHR23328">
    <property type="entry name" value="RING-TYPE DOMAIN-CONTAINING PROTEIN"/>
    <property type="match status" value="1"/>
</dbReference>
<dbReference type="Pfam" id="PF14447">
    <property type="entry name" value="Prok-RING_4"/>
    <property type="match status" value="1"/>
</dbReference>
<dbReference type="SMART" id="SM00184">
    <property type="entry name" value="RING"/>
    <property type="match status" value="1"/>
</dbReference>
<dbReference type="SUPFAM" id="SSF57850">
    <property type="entry name" value="RING/U-box"/>
    <property type="match status" value="1"/>
</dbReference>
<dbReference type="PROSITE" id="PS50089">
    <property type="entry name" value="ZF_RING_2"/>
    <property type="match status" value="1"/>
</dbReference>
<gene>
    <name evidence="3" type="primary">Rnf168</name>
</gene>
<evidence type="ECO:0000250" key="1">
    <source>
        <dbReference type="UniProtKB" id="B2RYR0"/>
    </source>
</evidence>
<evidence type="ECO:0000250" key="2">
    <source>
        <dbReference type="UniProtKB" id="Q8IYW5"/>
    </source>
</evidence>
<evidence type="ECO:0000255" key="3">
    <source>
        <dbReference type="HAMAP-Rule" id="MF_03066"/>
    </source>
</evidence>
<evidence type="ECO:0000256" key="4">
    <source>
        <dbReference type="SAM" id="MobiDB-lite"/>
    </source>
</evidence>
<evidence type="ECO:0000269" key="5">
    <source>
    </source>
</evidence>
<evidence type="ECO:0000305" key="6"/>
<evidence type="ECO:0007744" key="7">
    <source>
    </source>
</evidence>
<keyword id="KW-0156">Chromatin regulator</keyword>
<keyword id="KW-0227">DNA damage</keyword>
<keyword id="KW-0234">DNA repair</keyword>
<keyword id="KW-1017">Isopeptide bond</keyword>
<keyword id="KW-0479">Metal-binding</keyword>
<keyword id="KW-0539">Nucleus</keyword>
<keyword id="KW-0597">Phosphoprotein</keyword>
<keyword id="KW-1185">Reference proteome</keyword>
<keyword id="KW-0808">Transferase</keyword>
<keyword id="KW-0832">Ubl conjugation</keyword>
<keyword id="KW-0833">Ubl conjugation pathway</keyword>
<keyword id="KW-0862">Zinc</keyword>
<keyword id="KW-0863">Zinc-finger</keyword>